<organism>
    <name type="scientific">Xenopus laevis</name>
    <name type="common">African clawed frog</name>
    <dbReference type="NCBI Taxonomy" id="8355"/>
    <lineage>
        <taxon>Eukaryota</taxon>
        <taxon>Metazoa</taxon>
        <taxon>Chordata</taxon>
        <taxon>Craniata</taxon>
        <taxon>Vertebrata</taxon>
        <taxon>Euteleostomi</taxon>
        <taxon>Amphibia</taxon>
        <taxon>Batrachia</taxon>
        <taxon>Anura</taxon>
        <taxon>Pipoidea</taxon>
        <taxon>Pipidae</taxon>
        <taxon>Xenopodinae</taxon>
        <taxon>Xenopus</taxon>
        <taxon>Xenopus</taxon>
    </lineage>
</organism>
<dbReference type="EC" id="2.5.1.25" evidence="1"/>
<dbReference type="EMBL" id="BC077405">
    <property type="protein sequence ID" value="AAH77405.1"/>
    <property type="molecule type" value="mRNA"/>
</dbReference>
<dbReference type="RefSeq" id="NP_001086758.1">
    <property type="nucleotide sequence ID" value="NM_001093289.1"/>
</dbReference>
<dbReference type="RefSeq" id="XP_018106510.1">
    <property type="nucleotide sequence ID" value="XM_018251021.1"/>
</dbReference>
<dbReference type="RefSeq" id="XP_018106511.1">
    <property type="nucleotide sequence ID" value="XM_018251022.1"/>
</dbReference>
<dbReference type="RefSeq" id="XP_018106512.1">
    <property type="nucleotide sequence ID" value="XM_018251023.1"/>
</dbReference>
<dbReference type="DNASU" id="446593"/>
<dbReference type="GeneID" id="446593"/>
<dbReference type="KEGG" id="xla:446593"/>
<dbReference type="AGR" id="Xenbase:XB-GENE-944647"/>
<dbReference type="CTD" id="446593"/>
<dbReference type="Xenbase" id="XB-GENE-944647">
    <property type="gene designation" value="dtwd1.L"/>
</dbReference>
<dbReference type="OMA" id="VNAWGLN"/>
<dbReference type="OrthoDB" id="3173at2759"/>
<dbReference type="Proteomes" id="UP000186698">
    <property type="component" value="Chromosome 3L"/>
</dbReference>
<dbReference type="Bgee" id="446593">
    <property type="expression patterns" value="Expressed in gastrula and 19 other cell types or tissues"/>
</dbReference>
<dbReference type="GO" id="GO:0005634">
    <property type="term" value="C:nucleus"/>
    <property type="evidence" value="ECO:0000250"/>
    <property type="project" value="UniProtKB"/>
</dbReference>
<dbReference type="GO" id="GO:0016432">
    <property type="term" value="F:tRNA-uridine aminocarboxypropyltransferase activity"/>
    <property type="evidence" value="ECO:0000250"/>
    <property type="project" value="UniProtKB"/>
</dbReference>
<dbReference type="GO" id="GO:0006400">
    <property type="term" value="P:tRNA modification"/>
    <property type="evidence" value="ECO:0000250"/>
    <property type="project" value="UniProtKB"/>
</dbReference>
<dbReference type="InterPro" id="IPR005636">
    <property type="entry name" value="DTW"/>
</dbReference>
<dbReference type="InterPro" id="IPR051521">
    <property type="entry name" value="tRNA_Mod/Golgi_Maint"/>
</dbReference>
<dbReference type="PANTHER" id="PTHR15627">
    <property type="entry name" value="NATURAL KILLER CELL-SPECIFIC ANTIGEN KLIP1"/>
    <property type="match status" value="1"/>
</dbReference>
<dbReference type="PANTHER" id="PTHR15627:SF8">
    <property type="entry name" value="TRNA-URIDINE AMINOCARBOXYPROPYLTRANSFERASE 1"/>
    <property type="match status" value="1"/>
</dbReference>
<dbReference type="Pfam" id="PF03942">
    <property type="entry name" value="DTW"/>
    <property type="match status" value="1"/>
</dbReference>
<dbReference type="SMART" id="SM01144">
    <property type="entry name" value="DTW"/>
    <property type="match status" value="1"/>
</dbReference>
<name>DTWD1_XENLA</name>
<feature type="chain" id="PRO_0000308217" description="tRNA-uridine aminocarboxypropyltransferase 1">
    <location>
        <begin position="1"/>
        <end position="291"/>
    </location>
</feature>
<feature type="region of interest" description="Disordered" evidence="2">
    <location>
        <begin position="158"/>
        <end position="181"/>
    </location>
</feature>
<feature type="short sequence motif" description="DXTW">
    <location>
        <begin position="199"/>
        <end position="202"/>
    </location>
</feature>
<feature type="compositionally biased region" description="Basic and acidic residues" evidence="2">
    <location>
        <begin position="171"/>
        <end position="181"/>
    </location>
</feature>
<keyword id="KW-0539">Nucleus</keyword>
<keyword id="KW-1185">Reference proteome</keyword>
<keyword id="KW-0949">S-adenosyl-L-methionine</keyword>
<keyword id="KW-0808">Transferase</keyword>
<keyword id="KW-0819">tRNA processing</keyword>
<gene>
    <name evidence="1" type="primary">dtwd1</name>
</gene>
<proteinExistence type="evidence at transcript level"/>
<sequence length="291" mass="33542">MSHEKSLQEKKDSSSFKSFHDGASLENDLLQNLQLSSQTVLEIAQKKGRSKCPKCNSSRMFYCYTCFVPVESVPSDDIPVVKLPLKIDIIKHPNETDGKSTAVHAKLLAHEDVTVYTYPCVPQYHDQKHEVVVVFPGPDSVSLSDYLLYLSSSGDLEKNSAYEPSSKRPKFSPENDKNTYEGIDKKKPVNFLKKVIFIDSTWNQTNKMIADERLQGLVHVELMERKTFFWRHQKGTPNTYLSTIEAIYYFMVDYHTKILQKDYKGEYDNLLFFFSFMYRIINDAKKSAGKL</sequence>
<reference key="1">
    <citation type="submission" date="2004-07" db="EMBL/GenBank/DDBJ databases">
        <authorList>
            <consortium name="NIH - Xenopus Gene Collection (XGC) project"/>
        </authorList>
    </citation>
    <scope>NUCLEOTIDE SEQUENCE [LARGE SCALE MRNA]</scope>
    <source>
        <tissue>Embryo</tissue>
    </source>
</reference>
<comment type="function">
    <text evidence="1">Catalyzes the formation of 3-(3-amino-3-carboxypropyl)uridine (acp3U) at position 20 in the D-loop of several cytoplasmic tRNAs (acp3U(20)).</text>
</comment>
<comment type="catalytic activity">
    <reaction evidence="1">
        <text>a uridine in tRNA + S-adenosyl-L-methionine = a 3-[(3S)-3-amino-3-carboxypropyl]uridine in tRNA + S-methyl-5'-thioadenosine + H(+)</text>
        <dbReference type="Rhea" id="RHEA:62432"/>
        <dbReference type="Rhea" id="RHEA-COMP:13339"/>
        <dbReference type="Rhea" id="RHEA-COMP:16092"/>
        <dbReference type="ChEBI" id="CHEBI:15378"/>
        <dbReference type="ChEBI" id="CHEBI:17509"/>
        <dbReference type="ChEBI" id="CHEBI:59789"/>
        <dbReference type="ChEBI" id="CHEBI:65315"/>
        <dbReference type="ChEBI" id="CHEBI:82930"/>
        <dbReference type="EC" id="2.5.1.25"/>
    </reaction>
</comment>
<comment type="subcellular location">
    <subcellularLocation>
        <location evidence="1">Nucleus</location>
    </subcellularLocation>
</comment>
<comment type="similarity">
    <text evidence="3">Belongs to the TDD superfamily. DTWD1 family.</text>
</comment>
<evidence type="ECO:0000250" key="1">
    <source>
        <dbReference type="UniProtKB" id="Q8N5C7"/>
    </source>
</evidence>
<evidence type="ECO:0000256" key="2">
    <source>
        <dbReference type="SAM" id="MobiDB-lite"/>
    </source>
</evidence>
<evidence type="ECO:0000305" key="3"/>
<accession>Q6DDV1</accession>
<protein>
    <recommendedName>
        <fullName evidence="3">tRNA-uridine aminocarboxypropyltransferase 1</fullName>
        <ecNumber evidence="1">2.5.1.25</ecNumber>
    </recommendedName>
    <alternativeName>
        <fullName evidence="3">DTW domain-containing protein 1</fullName>
    </alternativeName>
</protein>